<feature type="chain" id="PRO_1000132205" description="Probable transcriptional regulatory protein KPK_1906">
    <location>
        <begin position="1"/>
        <end position="246"/>
    </location>
</feature>
<comment type="subcellular location">
    <subcellularLocation>
        <location evidence="1">Cytoplasm</location>
    </subcellularLocation>
</comment>
<comment type="similarity">
    <text evidence="1">Belongs to the TACO1 family.</text>
</comment>
<keyword id="KW-0963">Cytoplasm</keyword>
<keyword id="KW-0238">DNA-binding</keyword>
<keyword id="KW-0804">Transcription</keyword>
<keyword id="KW-0805">Transcription regulation</keyword>
<reference key="1">
    <citation type="journal article" date="2008" name="PLoS Genet.">
        <title>Complete genome sequence of the N2-fixing broad host range endophyte Klebsiella pneumoniae 342 and virulence predictions verified in mice.</title>
        <authorList>
            <person name="Fouts D.E."/>
            <person name="Tyler H.L."/>
            <person name="DeBoy R.T."/>
            <person name="Daugherty S."/>
            <person name="Ren Q."/>
            <person name="Badger J.H."/>
            <person name="Durkin A.S."/>
            <person name="Huot H."/>
            <person name="Shrivastava S."/>
            <person name="Kothari S."/>
            <person name="Dodson R.J."/>
            <person name="Mohamoud Y."/>
            <person name="Khouri H."/>
            <person name="Roesch L.F.W."/>
            <person name="Krogfelt K.A."/>
            <person name="Struve C."/>
            <person name="Triplett E.W."/>
            <person name="Methe B.A."/>
        </authorList>
    </citation>
    <scope>NUCLEOTIDE SEQUENCE [LARGE SCALE GENOMIC DNA]</scope>
    <source>
        <strain>342</strain>
    </source>
</reference>
<name>Y1906_KLEP3</name>
<dbReference type="EMBL" id="CP000964">
    <property type="protein sequence ID" value="ACI09686.1"/>
    <property type="molecule type" value="Genomic_DNA"/>
</dbReference>
<dbReference type="SMR" id="B5XQ02"/>
<dbReference type="KEGG" id="kpe:KPK_1906"/>
<dbReference type="HOGENOM" id="CLU_062974_2_2_6"/>
<dbReference type="BioCyc" id="KPNE507522:GI0B-1900-MONOMER"/>
<dbReference type="Proteomes" id="UP000001734">
    <property type="component" value="Chromosome"/>
</dbReference>
<dbReference type="GO" id="GO:0005829">
    <property type="term" value="C:cytosol"/>
    <property type="evidence" value="ECO:0007669"/>
    <property type="project" value="TreeGrafter"/>
</dbReference>
<dbReference type="GO" id="GO:0003677">
    <property type="term" value="F:DNA binding"/>
    <property type="evidence" value="ECO:0007669"/>
    <property type="project" value="UniProtKB-UniRule"/>
</dbReference>
<dbReference type="GO" id="GO:0006355">
    <property type="term" value="P:regulation of DNA-templated transcription"/>
    <property type="evidence" value="ECO:0007669"/>
    <property type="project" value="UniProtKB-UniRule"/>
</dbReference>
<dbReference type="FunFam" id="1.10.10.200:FF:000001">
    <property type="entry name" value="Probable transcriptional regulatory protein YebC"/>
    <property type="match status" value="1"/>
</dbReference>
<dbReference type="FunFam" id="3.30.70.980:FF:000002">
    <property type="entry name" value="Probable transcriptional regulatory protein YebC"/>
    <property type="match status" value="1"/>
</dbReference>
<dbReference type="Gene3D" id="1.10.10.200">
    <property type="match status" value="1"/>
</dbReference>
<dbReference type="Gene3D" id="3.30.70.980">
    <property type="match status" value="2"/>
</dbReference>
<dbReference type="HAMAP" id="MF_00693">
    <property type="entry name" value="Transcrip_reg_TACO1"/>
    <property type="match status" value="1"/>
</dbReference>
<dbReference type="InterPro" id="IPR017856">
    <property type="entry name" value="Integrase-like_N"/>
</dbReference>
<dbReference type="InterPro" id="IPR048300">
    <property type="entry name" value="TACO1_YebC-like_2nd/3rd_dom"/>
</dbReference>
<dbReference type="InterPro" id="IPR049083">
    <property type="entry name" value="TACO1_YebC_N"/>
</dbReference>
<dbReference type="InterPro" id="IPR002876">
    <property type="entry name" value="Transcrip_reg_TACO1-like"/>
</dbReference>
<dbReference type="InterPro" id="IPR026564">
    <property type="entry name" value="Transcrip_reg_TACO1-like_dom3"/>
</dbReference>
<dbReference type="InterPro" id="IPR029072">
    <property type="entry name" value="YebC-like"/>
</dbReference>
<dbReference type="NCBIfam" id="NF001030">
    <property type="entry name" value="PRK00110.1"/>
    <property type="match status" value="1"/>
</dbReference>
<dbReference type="NCBIfam" id="NF009044">
    <property type="entry name" value="PRK12378.1"/>
    <property type="match status" value="1"/>
</dbReference>
<dbReference type="NCBIfam" id="TIGR01033">
    <property type="entry name" value="YebC/PmpR family DNA-binding transcriptional regulator"/>
    <property type="match status" value="1"/>
</dbReference>
<dbReference type="PANTHER" id="PTHR12532:SF6">
    <property type="entry name" value="TRANSCRIPTIONAL REGULATORY PROTEIN YEBC-RELATED"/>
    <property type="match status" value="1"/>
</dbReference>
<dbReference type="PANTHER" id="PTHR12532">
    <property type="entry name" value="TRANSLATIONAL ACTIVATOR OF CYTOCHROME C OXIDASE 1"/>
    <property type="match status" value="1"/>
</dbReference>
<dbReference type="Pfam" id="PF20772">
    <property type="entry name" value="TACO1_YebC_N"/>
    <property type="match status" value="1"/>
</dbReference>
<dbReference type="Pfam" id="PF01709">
    <property type="entry name" value="Transcrip_reg"/>
    <property type="match status" value="1"/>
</dbReference>
<dbReference type="SUPFAM" id="SSF75625">
    <property type="entry name" value="YebC-like"/>
    <property type="match status" value="1"/>
</dbReference>
<gene>
    <name type="ordered locus">KPK_1906</name>
</gene>
<accession>B5XQ02</accession>
<organism>
    <name type="scientific">Klebsiella pneumoniae (strain 342)</name>
    <dbReference type="NCBI Taxonomy" id="507522"/>
    <lineage>
        <taxon>Bacteria</taxon>
        <taxon>Pseudomonadati</taxon>
        <taxon>Pseudomonadota</taxon>
        <taxon>Gammaproteobacteria</taxon>
        <taxon>Enterobacterales</taxon>
        <taxon>Enterobacteriaceae</taxon>
        <taxon>Klebsiella/Raoultella group</taxon>
        <taxon>Klebsiella</taxon>
        <taxon>Klebsiella pneumoniae complex</taxon>
    </lineage>
</organism>
<proteinExistence type="inferred from homology"/>
<protein>
    <recommendedName>
        <fullName evidence="1">Probable transcriptional regulatory protein KPK_1906</fullName>
    </recommendedName>
</protein>
<sequence length="246" mass="26317">MAGHSKWANTKHRKAAQDAKRGKIFTKIIRELVTAARLGGGDPASNPRLRAAVDKALSNNMTRDTLNRAIARGVGGDEDANMETIIYEGYGPGGTAVMVECLSDNRNRTVAEVRHAFTKTGGNLGTDGSVSYLFSKKGVISFEKGDEDTIMEAALEAGAEDVVTYDDGAIDVYTAWEEMGAVRDALEAAGLKADAAEVSMIPSTKADMDAETAPKLLRLIDMLEDCDDVQEVYHNGEISDEVAATL</sequence>
<evidence type="ECO:0000255" key="1">
    <source>
        <dbReference type="HAMAP-Rule" id="MF_00693"/>
    </source>
</evidence>